<comment type="function">
    <text evidence="1">Involved in cell size determination.</text>
</comment>
<comment type="subcellular location">
    <subcellularLocation>
        <location evidence="1">Secreted</location>
        <location evidence="1">Extracellular space</location>
        <location evidence="1">Apoplast</location>
    </subcellularLocation>
    <subcellularLocation>
        <location evidence="1">Secreted</location>
        <location evidence="1">Cell wall</location>
    </subcellularLocation>
</comment>
<comment type="tissue specificity">
    <text evidence="4">Expressed in flowers and stems.</text>
</comment>
<comment type="developmental stage">
    <text evidence="4">Barely detectable in 6 days after-germination (DAG) seedlings, but highly expressed in 14 DAG seedlings.</text>
</comment>
<comment type="domain">
    <text evidence="5">The BURP domain located at the C-terminus has not been identified in non-plant proteins.</text>
</comment>
<comment type="disruption phenotype">
    <text evidence="4">No visible phenotype. Atpgl1, atpgl2 and atpgl3 triple mutants produce smaller leaves and petioles.</text>
</comment>
<accession>P92982</accession>
<accession>Q9S9K5</accession>
<keyword id="KW-0052">Apoplast</keyword>
<keyword id="KW-0134">Cell wall</keyword>
<keyword id="KW-0325">Glycoprotein</keyword>
<keyword id="KW-1185">Reference proteome</keyword>
<keyword id="KW-0677">Repeat</keyword>
<keyword id="KW-0964">Secreted</keyword>
<keyword id="KW-0732">Signal</keyword>
<evidence type="ECO:0000250" key="1">
    <source>
        <dbReference type="UniProtKB" id="P92990"/>
    </source>
</evidence>
<evidence type="ECO:0000255" key="2"/>
<evidence type="ECO:0000255" key="3">
    <source>
        <dbReference type="PROSITE-ProRule" id="PRU00604"/>
    </source>
</evidence>
<evidence type="ECO:0000269" key="4">
    <source>
    </source>
</evidence>
<evidence type="ECO:0000269" key="5">
    <source>
    </source>
</evidence>
<evidence type="ECO:0000303" key="6">
    <source>
    </source>
</evidence>
<evidence type="ECO:0000303" key="7">
    <source>
    </source>
</evidence>
<evidence type="ECO:0000305" key="8"/>
<evidence type="ECO:0000312" key="9">
    <source>
        <dbReference type="Araport" id="AT1G23760"/>
    </source>
</evidence>
<evidence type="ECO:0000312" key="10">
    <source>
        <dbReference type="EMBL" id="AAC98031.1"/>
    </source>
</evidence>
<protein>
    <recommendedName>
        <fullName evidence="7">Polygalacturonase 1 beta-like protein 1</fullName>
        <shortName evidence="7">AtPGL1</shortName>
    </recommendedName>
    <alternativeName>
        <fullName>Aromatic-rich glycoprotein JP630</fullName>
    </alternativeName>
    <alternativeName>
        <fullName evidence="7">PG1beta-like protein 1</fullName>
    </alternativeName>
    <alternativeName>
        <fullName evidence="6">Polygalacturonase 3</fullName>
    </alternativeName>
    <alternativeName>
        <fullName>Probable polygalacturonase non-catalytic subunit JP630</fullName>
    </alternativeName>
</protein>
<sequence length="622" mass="68229">MRKQFVFLLPFLSRLYHVVIAGGERLTNGGFSPEINPFTPKASLVRYWNKQIHHQSPGSAFLLSKASPLTAVASATFAKLASENALPDRLPDFCSAANLFCFPDLGPTLEKHSNDVKFSVYDQRNFTNYGTIHPGGADSFKKYSQNGNAVTDSFRRYSRDAAGHEDKFTGYADNSNVVEEKFNSYGTSATGGSGDFKNYQSGVNNPTTRFKAYSDEGNGRAQTFKTYTHEANSGPGQSFTSYGKNGNGAPNEFSSYGVSSNVIGSDFSNYGENGNAANDTFKGYGGDGNVPQNNFKSYGASGNAAVDTFLNYRDNANVGDDSFSSYAKNSNFEKVDFVNYGKSINPGSESFSGYGKGAEGNKIDFKTYTQNSTFKDYTKTGVEFAKYNRSSLGGGKTVNKWVEPGKFFRESMLKEGTLIWMPDIKDKMPKRSFLPRSIVSKLPFSTSKIAEIKRVFHANDNSTMEGIITDAVRECERPPTVSETKRCVGSAEDMIDFATSVLGRSVVLRTTESVAGSKEKVMIGKVNGINGGRVTKSVSCHQSLYPYLLYYCHSVPKVRVYESDLLDPKSKAKINHGIAICHMDTSAWGANHGAFMLLGSRPGQIEVCHWIFENDMNWAIAD</sequence>
<reference key="1">
    <citation type="submission" date="1996-05" db="EMBL/GenBank/DDBJ databases">
        <title>Arabidopsis aromatic rich glycoprotein JP630.</title>
        <authorList>
            <person name="Watson C.F."/>
            <person name="Schuchman D.B."/>
            <person name="Liu J."/>
            <person name="Dellapenna D."/>
        </authorList>
    </citation>
    <scope>NUCLEOTIDE SEQUENCE [MRNA]</scope>
</reference>
<reference key="2">
    <citation type="journal article" date="2000" name="Nature">
        <title>Sequence and analysis of chromosome 1 of the plant Arabidopsis thaliana.</title>
        <authorList>
            <person name="Theologis A."/>
            <person name="Ecker J.R."/>
            <person name="Palm C.J."/>
            <person name="Federspiel N.A."/>
            <person name="Kaul S."/>
            <person name="White O."/>
            <person name="Alonso J."/>
            <person name="Altafi H."/>
            <person name="Araujo R."/>
            <person name="Bowman C.L."/>
            <person name="Brooks S.Y."/>
            <person name="Buehler E."/>
            <person name="Chan A."/>
            <person name="Chao Q."/>
            <person name="Chen H."/>
            <person name="Cheuk R.F."/>
            <person name="Chin C.W."/>
            <person name="Chung M.K."/>
            <person name="Conn L."/>
            <person name="Conway A.B."/>
            <person name="Conway A.R."/>
            <person name="Creasy T.H."/>
            <person name="Dewar K."/>
            <person name="Dunn P."/>
            <person name="Etgu P."/>
            <person name="Feldblyum T.V."/>
            <person name="Feng J.-D."/>
            <person name="Fong B."/>
            <person name="Fujii C.Y."/>
            <person name="Gill J.E."/>
            <person name="Goldsmith A.D."/>
            <person name="Haas B."/>
            <person name="Hansen N.F."/>
            <person name="Hughes B."/>
            <person name="Huizar L."/>
            <person name="Hunter J.L."/>
            <person name="Jenkins J."/>
            <person name="Johnson-Hopson C."/>
            <person name="Khan S."/>
            <person name="Khaykin E."/>
            <person name="Kim C.J."/>
            <person name="Koo H.L."/>
            <person name="Kremenetskaia I."/>
            <person name="Kurtz D.B."/>
            <person name="Kwan A."/>
            <person name="Lam B."/>
            <person name="Langin-Hooper S."/>
            <person name="Lee A."/>
            <person name="Lee J.M."/>
            <person name="Lenz C.A."/>
            <person name="Li J.H."/>
            <person name="Li Y.-P."/>
            <person name="Lin X."/>
            <person name="Liu S.X."/>
            <person name="Liu Z.A."/>
            <person name="Luros J.S."/>
            <person name="Maiti R."/>
            <person name="Marziali A."/>
            <person name="Militscher J."/>
            <person name="Miranda M."/>
            <person name="Nguyen M."/>
            <person name="Nierman W.C."/>
            <person name="Osborne B.I."/>
            <person name="Pai G."/>
            <person name="Peterson J."/>
            <person name="Pham P.K."/>
            <person name="Rizzo M."/>
            <person name="Rooney T."/>
            <person name="Rowley D."/>
            <person name="Sakano H."/>
            <person name="Salzberg S.L."/>
            <person name="Schwartz J.R."/>
            <person name="Shinn P."/>
            <person name="Southwick A.M."/>
            <person name="Sun H."/>
            <person name="Tallon L.J."/>
            <person name="Tambunga G."/>
            <person name="Toriumi M.J."/>
            <person name="Town C.D."/>
            <person name="Utterback T."/>
            <person name="Van Aken S."/>
            <person name="Vaysberg M."/>
            <person name="Vysotskaia V.S."/>
            <person name="Walker M."/>
            <person name="Wu D."/>
            <person name="Yu G."/>
            <person name="Fraser C.M."/>
            <person name="Venter J.C."/>
            <person name="Davis R.W."/>
        </authorList>
    </citation>
    <scope>NUCLEOTIDE SEQUENCE [LARGE SCALE GENOMIC DNA]</scope>
    <source>
        <strain>cv. Columbia</strain>
    </source>
</reference>
<reference key="3">
    <citation type="journal article" date="2017" name="Plant J.">
        <title>Araport11: a complete reannotation of the Arabidopsis thaliana reference genome.</title>
        <authorList>
            <person name="Cheng C.Y."/>
            <person name="Krishnakumar V."/>
            <person name="Chan A.P."/>
            <person name="Thibaud-Nissen F."/>
            <person name="Schobel S."/>
            <person name="Town C.D."/>
        </authorList>
    </citation>
    <scope>GENOME REANNOTATION</scope>
    <source>
        <strain>cv. Columbia</strain>
    </source>
</reference>
<reference key="4">
    <citation type="journal article" date="1998" name="Mol. Gen. Genet.">
        <title>A conserved BURP domain defines a novel group of plant proteins with unusual primary structures.</title>
        <authorList>
            <person name="Hattori J."/>
            <person name="Boutilier K.A."/>
            <person name="van Lookeren Campagne M.M."/>
            <person name="Miki B.L."/>
        </authorList>
    </citation>
    <scope>DOMAIN</scope>
</reference>
<reference key="5">
    <citation type="journal article" date="2009" name="Plant Mol. Biol.">
        <title>The BURP domain protein AtUSPL1 of Arabidopsis thaliana is destined to the protein storage vacuoles and overexpression of the cognate gene distorts seed development.</title>
        <authorList>
            <person name="Van Son L."/>
            <person name="Tiedemann J."/>
            <person name="Rutten T."/>
            <person name="Hillmer S."/>
            <person name="Hinz G."/>
            <person name="Zank T."/>
            <person name="Manteuffel R."/>
            <person name="Baeumlein H."/>
        </authorList>
    </citation>
    <scope>GENE FAMILY</scope>
    <scope>NOMENCLATURE</scope>
</reference>
<reference key="6">
    <citation type="journal article" date="2015" name="Front. Plant Sci.">
        <title>AtPGL3 is an Arabidopsis BURP domain protein that is localized to the cell wall and promotes cell enlargement.</title>
        <authorList>
            <person name="Park J."/>
            <person name="Cui Y."/>
            <person name="Kang B.H."/>
        </authorList>
    </citation>
    <scope>GENE FAMILY</scope>
    <scope>NOMENCLATURE</scope>
    <scope>TISSUE SPECIFICITY</scope>
    <scope>DEVELOPMENTAL STAGE</scope>
    <scope>DISRUPTION PHENOTYPE</scope>
</reference>
<dbReference type="EMBL" id="U59467">
    <property type="protein sequence ID" value="AAB39538.1"/>
    <property type="molecule type" value="mRNA"/>
</dbReference>
<dbReference type="EMBL" id="AC005990">
    <property type="protein sequence ID" value="AAC98031.1"/>
    <property type="molecule type" value="Genomic_DNA"/>
</dbReference>
<dbReference type="EMBL" id="CP002684">
    <property type="protein sequence ID" value="AEE30429.1"/>
    <property type="molecule type" value="Genomic_DNA"/>
</dbReference>
<dbReference type="PIR" id="G86371">
    <property type="entry name" value="G86371"/>
</dbReference>
<dbReference type="RefSeq" id="NP_173788.1">
    <property type="nucleotide sequence ID" value="NM_102224.4"/>
</dbReference>
<dbReference type="FunCoup" id="P92982">
    <property type="interactions" value="202"/>
</dbReference>
<dbReference type="STRING" id="3702.P92982"/>
<dbReference type="GlyCosmos" id="P92982">
    <property type="glycosylation" value="5 sites, No reported glycans"/>
</dbReference>
<dbReference type="GlyGen" id="P92982">
    <property type="glycosylation" value="5 sites"/>
</dbReference>
<dbReference type="iPTMnet" id="P92982"/>
<dbReference type="PaxDb" id="3702-AT1G23760.1"/>
<dbReference type="ProteomicsDB" id="235052"/>
<dbReference type="EnsemblPlants" id="AT1G23760.1">
    <property type="protein sequence ID" value="AT1G23760.1"/>
    <property type="gene ID" value="AT1G23760"/>
</dbReference>
<dbReference type="GeneID" id="838987"/>
<dbReference type="Gramene" id="AT1G23760.1">
    <property type="protein sequence ID" value="AT1G23760.1"/>
    <property type="gene ID" value="AT1G23760"/>
</dbReference>
<dbReference type="KEGG" id="ath:AT1G23760"/>
<dbReference type="Araport" id="AT1G23760"/>
<dbReference type="TAIR" id="AT1G23760">
    <property type="gene designation" value="JP630"/>
</dbReference>
<dbReference type="eggNOG" id="ENOG502QT2V">
    <property type="taxonomic scope" value="Eukaryota"/>
</dbReference>
<dbReference type="HOGENOM" id="CLU_011822_5_0_1"/>
<dbReference type="InParanoid" id="P92982"/>
<dbReference type="OMA" id="DQRNFTN"/>
<dbReference type="PhylomeDB" id="P92982"/>
<dbReference type="PRO" id="PR:P92982"/>
<dbReference type="Proteomes" id="UP000006548">
    <property type="component" value="Chromosome 1"/>
</dbReference>
<dbReference type="ExpressionAtlas" id="P92982">
    <property type="expression patterns" value="baseline and differential"/>
</dbReference>
<dbReference type="GO" id="GO:0048046">
    <property type="term" value="C:apoplast"/>
    <property type="evidence" value="ECO:0007669"/>
    <property type="project" value="UniProtKB-SubCell"/>
</dbReference>
<dbReference type="InterPro" id="IPR004873">
    <property type="entry name" value="BURP_dom"/>
</dbReference>
<dbReference type="InterPro" id="IPR051897">
    <property type="entry name" value="PG-associated_BURP"/>
</dbReference>
<dbReference type="PANTHER" id="PTHR31458:SF10">
    <property type="entry name" value="POLYGALACTURONASE 1 BETA-LIKE PROTEIN 1-RELATED"/>
    <property type="match status" value="1"/>
</dbReference>
<dbReference type="PANTHER" id="PTHR31458">
    <property type="entry name" value="POLYGALACTURONASE 1 BETA-LIKE PROTEIN 2"/>
    <property type="match status" value="1"/>
</dbReference>
<dbReference type="Pfam" id="PF03181">
    <property type="entry name" value="BURP"/>
    <property type="match status" value="1"/>
</dbReference>
<dbReference type="SMART" id="SM01045">
    <property type="entry name" value="BURP"/>
    <property type="match status" value="1"/>
</dbReference>
<dbReference type="PROSITE" id="PS51277">
    <property type="entry name" value="BURP"/>
    <property type="match status" value="1"/>
</dbReference>
<name>PGL1_ARATH</name>
<organism>
    <name type="scientific">Arabidopsis thaliana</name>
    <name type="common">Mouse-ear cress</name>
    <dbReference type="NCBI Taxonomy" id="3702"/>
    <lineage>
        <taxon>Eukaryota</taxon>
        <taxon>Viridiplantae</taxon>
        <taxon>Streptophyta</taxon>
        <taxon>Embryophyta</taxon>
        <taxon>Tracheophyta</taxon>
        <taxon>Spermatophyta</taxon>
        <taxon>Magnoliopsida</taxon>
        <taxon>eudicotyledons</taxon>
        <taxon>Gunneridae</taxon>
        <taxon>Pentapetalae</taxon>
        <taxon>rosids</taxon>
        <taxon>malvids</taxon>
        <taxon>Brassicales</taxon>
        <taxon>Brassicaceae</taxon>
        <taxon>Camelineae</taxon>
        <taxon>Arabidopsis</taxon>
    </lineage>
</organism>
<feature type="signal peptide" evidence="2">
    <location>
        <begin position="1"/>
        <end position="21"/>
    </location>
</feature>
<feature type="chain" id="PRO_0000042951" description="Polygalacturonase 1 beta-like protein 1">
    <location>
        <begin position="22"/>
        <end position="622"/>
    </location>
</feature>
<feature type="repeat" description="FXXY 1" evidence="8">
    <location>
        <begin position="118"/>
        <end position="121"/>
    </location>
</feature>
<feature type="repeat" description="FXXY 2" evidence="8">
    <location>
        <begin position="126"/>
        <end position="129"/>
    </location>
</feature>
<feature type="repeat" description="FXXY 3" evidence="8">
    <location>
        <begin position="140"/>
        <end position="143"/>
    </location>
</feature>
<feature type="repeat" description="FXXY 4" evidence="8">
    <location>
        <begin position="154"/>
        <end position="157"/>
    </location>
</feature>
<feature type="repeat" description="FXXY 5" evidence="8">
    <location>
        <begin position="168"/>
        <end position="171"/>
    </location>
</feature>
<feature type="repeat" description="FXXY 6" evidence="8">
    <location>
        <begin position="182"/>
        <end position="185"/>
    </location>
</feature>
<feature type="repeat" description="FXXY 7" evidence="8">
    <location>
        <begin position="196"/>
        <end position="199"/>
    </location>
</feature>
<feature type="repeat" description="FXXY 8" evidence="8">
    <location>
        <begin position="210"/>
        <end position="213"/>
    </location>
</feature>
<feature type="repeat" description="FXXY 9" evidence="8">
    <location>
        <begin position="224"/>
        <end position="227"/>
    </location>
</feature>
<feature type="repeat" description="FXXY 10" evidence="8">
    <location>
        <begin position="239"/>
        <end position="242"/>
    </location>
</feature>
<feature type="repeat" description="FXXY 11" evidence="8">
    <location>
        <begin position="253"/>
        <end position="256"/>
    </location>
</feature>
<feature type="repeat" description="FXXY 12" evidence="8">
    <location>
        <begin position="267"/>
        <end position="270"/>
    </location>
</feature>
<feature type="repeat" description="FXXY 13" evidence="8">
    <location>
        <begin position="281"/>
        <end position="284"/>
    </location>
</feature>
<feature type="repeat" description="FXXY 14" evidence="8">
    <location>
        <begin position="295"/>
        <end position="298"/>
    </location>
</feature>
<feature type="repeat" description="FXXY 15" evidence="8">
    <location>
        <begin position="309"/>
        <end position="312"/>
    </location>
</feature>
<feature type="repeat" description="FXXY 16" evidence="8">
    <location>
        <begin position="323"/>
        <end position="326"/>
    </location>
</feature>
<feature type="repeat" description="FXXY 17" evidence="8">
    <location>
        <begin position="337"/>
        <end position="340"/>
    </location>
</feature>
<feature type="repeat" description="FXXY 18" evidence="8">
    <location>
        <begin position="351"/>
        <end position="354"/>
    </location>
</feature>
<feature type="repeat" description="FXXY 19" evidence="8">
    <location>
        <begin position="365"/>
        <end position="368"/>
    </location>
</feature>
<feature type="repeat" description="FXXY 20" evidence="8">
    <location>
        <begin position="374"/>
        <end position="377"/>
    </location>
</feature>
<feature type="repeat" description="FXXY 21" evidence="8">
    <location>
        <begin position="384"/>
        <end position="387"/>
    </location>
</feature>
<feature type="domain" description="BURP" evidence="3">
    <location>
        <begin position="407"/>
        <end position="621"/>
    </location>
</feature>
<feature type="glycosylation site" description="N-linked (GlcNAc...) asparagine" evidence="2">
    <location>
        <position position="125"/>
    </location>
</feature>
<feature type="glycosylation site" description="N-linked (GlcNAc...) asparagine" evidence="2">
    <location>
        <position position="278"/>
    </location>
</feature>
<feature type="glycosylation site" description="N-linked (GlcNAc...) asparagine" evidence="2">
    <location>
        <position position="371"/>
    </location>
</feature>
<feature type="glycosylation site" description="N-linked (GlcNAc...) asparagine" evidence="2">
    <location>
        <position position="388"/>
    </location>
</feature>
<feature type="glycosylation site" description="N-linked (GlcNAc...) asparagine" evidence="2">
    <location>
        <position position="461"/>
    </location>
</feature>
<feature type="sequence conflict" description="In Ref. 1; AAB39538." evidence="8" ref="1">
    <original>T</original>
    <variation>A</variation>
    <location>
        <position position="378"/>
    </location>
</feature>
<feature type="sequence conflict" description="In Ref. 1; AAB39538." evidence="8" ref="1">
    <original>R</original>
    <variation>C</variation>
    <location>
        <position position="436"/>
    </location>
</feature>
<proteinExistence type="evidence at transcript level"/>
<gene>
    <name evidence="7" type="primary">PGL1</name>
    <name type="synonym">JP630</name>
    <name evidence="6" type="synonym">PG3</name>
    <name evidence="9" type="ordered locus">At1g23760</name>
    <name evidence="10" type="ORF">F5O8.31</name>
</gene>